<proteinExistence type="evidence at protein level"/>
<keyword id="KW-0963">Cytoplasm</keyword>
<keyword id="KW-0343">GTPase activation</keyword>
<keyword id="KW-1185">Reference proteome</keyword>
<keyword id="KW-0677">Repeat</keyword>
<protein>
    <recommendedName>
        <fullName>TBC1 domain family member 8B</fullName>
    </recommendedName>
</protein>
<reference key="1">
    <citation type="journal article" date="2009" name="PLoS Biol.">
        <title>Lineage-specific biology revealed by a finished genome assembly of the mouse.</title>
        <authorList>
            <person name="Church D.M."/>
            <person name="Goodstadt L."/>
            <person name="Hillier L.W."/>
            <person name="Zody M.C."/>
            <person name="Goldstein S."/>
            <person name="She X."/>
            <person name="Bult C.J."/>
            <person name="Agarwala R."/>
            <person name="Cherry J.L."/>
            <person name="DiCuccio M."/>
            <person name="Hlavina W."/>
            <person name="Kapustin Y."/>
            <person name="Meric P."/>
            <person name="Maglott D."/>
            <person name="Birtle Z."/>
            <person name="Marques A.C."/>
            <person name="Graves T."/>
            <person name="Zhou S."/>
            <person name="Teague B."/>
            <person name="Potamousis K."/>
            <person name="Churas C."/>
            <person name="Place M."/>
            <person name="Herschleb J."/>
            <person name="Runnheim R."/>
            <person name="Forrest D."/>
            <person name="Amos-Landgraf J."/>
            <person name="Schwartz D.C."/>
            <person name="Cheng Z."/>
            <person name="Lindblad-Toh K."/>
            <person name="Eichler E.E."/>
            <person name="Ponting C.P."/>
        </authorList>
    </citation>
    <scope>NUCLEOTIDE SEQUENCE [LARGE SCALE GENOMIC DNA]</scope>
    <source>
        <strain>C57BL/6J</strain>
    </source>
</reference>
<reference key="2">
    <citation type="journal article" date="2004" name="Genome Res.">
        <title>The status, quality, and expansion of the NIH full-length cDNA project: the Mammalian Gene Collection (MGC).</title>
        <authorList>
            <consortium name="The MGC Project Team"/>
        </authorList>
    </citation>
    <scope>NUCLEOTIDE SEQUENCE [LARGE SCALE MRNA]</scope>
    <source>
        <tissue>Brain</tissue>
    </source>
</reference>
<reference key="3">
    <citation type="journal article" date="2010" name="Cell">
        <title>A tissue-specific atlas of mouse protein phosphorylation and expression.</title>
        <authorList>
            <person name="Huttlin E.L."/>
            <person name="Jedrychowski M.P."/>
            <person name="Elias J.E."/>
            <person name="Goswami T."/>
            <person name="Rad R."/>
            <person name="Beausoleil S.A."/>
            <person name="Villen J."/>
            <person name="Haas W."/>
            <person name="Sowa M.E."/>
            <person name="Gygi S.P."/>
        </authorList>
    </citation>
    <scope>IDENTIFICATION BY MASS SPECTROMETRY [LARGE SCALE ANALYSIS]</scope>
    <source>
        <tissue>Brain</tissue>
        <tissue>Heart</tissue>
        <tissue>Kidney</tissue>
        <tissue>Liver</tissue>
        <tissue>Lung</tissue>
        <tissue>Pancreas</tissue>
        <tissue>Spleen</tissue>
        <tissue>Testis</tissue>
    </source>
</reference>
<gene>
    <name type="primary">Tbc1d8b</name>
</gene>
<name>TBC8B_MOUSE</name>
<comment type="function">
    <text evidence="1">Involved in vesicular recycling, probably as a RAB11B GTPase-activating protein.</text>
</comment>
<comment type="subunit">
    <text evidence="1">Interacts (via domain Rab-GAP TBC) with RAB11B (in GTP-bound form).</text>
</comment>
<comment type="subcellular location">
    <subcellularLocation>
        <location evidence="1">Cytoplasm</location>
        <location evidence="1">Cytosol</location>
    </subcellularLocation>
</comment>
<comment type="domain">
    <text evidence="2">The arginine and glutamine fingers are critical for the GTPase-activating mechanism, they pull out Rab's 'switch 2' glutamine and insert in Rab's active site.</text>
</comment>
<accession>A3KGB4</accession>
<accession>B9EJW4</accession>
<organism>
    <name type="scientific">Mus musculus</name>
    <name type="common">Mouse</name>
    <dbReference type="NCBI Taxonomy" id="10090"/>
    <lineage>
        <taxon>Eukaryota</taxon>
        <taxon>Metazoa</taxon>
        <taxon>Chordata</taxon>
        <taxon>Craniata</taxon>
        <taxon>Vertebrata</taxon>
        <taxon>Euteleostomi</taxon>
        <taxon>Mammalia</taxon>
        <taxon>Eutheria</taxon>
        <taxon>Euarchontoglires</taxon>
        <taxon>Glires</taxon>
        <taxon>Rodentia</taxon>
        <taxon>Myomorpha</taxon>
        <taxon>Muroidea</taxon>
        <taxon>Muridae</taxon>
        <taxon>Murinae</taxon>
        <taxon>Mus</taxon>
        <taxon>Mus</taxon>
    </lineage>
</organism>
<feature type="chain" id="PRO_0000337184" description="TBC1 domain family member 8B">
    <location>
        <begin position="1"/>
        <end position="1114"/>
    </location>
</feature>
<feature type="domain" description="GRAM 1" evidence="3">
    <location>
        <begin position="145"/>
        <end position="212"/>
    </location>
</feature>
<feature type="domain" description="GRAM 2" evidence="3">
    <location>
        <begin position="285"/>
        <end position="353"/>
    </location>
</feature>
<feature type="domain" description="Rab-GAP TBC" evidence="4">
    <location>
        <begin position="486"/>
        <end position="673"/>
    </location>
</feature>
<feature type="domain" description="EF-hand" evidence="5">
    <location>
        <begin position="857"/>
        <end position="892"/>
    </location>
</feature>
<feature type="region of interest" description="Disordered" evidence="6">
    <location>
        <begin position="399"/>
        <end position="420"/>
    </location>
</feature>
<feature type="region of interest" description="Disordered" evidence="6">
    <location>
        <begin position="938"/>
        <end position="957"/>
    </location>
</feature>
<feature type="region of interest" description="Disordered" evidence="6">
    <location>
        <begin position="1032"/>
        <end position="1061"/>
    </location>
</feature>
<feature type="compositionally biased region" description="Polar residues" evidence="6">
    <location>
        <begin position="399"/>
        <end position="411"/>
    </location>
</feature>
<feature type="compositionally biased region" description="Basic and acidic residues" evidence="6">
    <location>
        <begin position="940"/>
        <end position="957"/>
    </location>
</feature>
<feature type="site" description="Arginine finger" evidence="2">
    <location>
        <position position="533"/>
    </location>
</feature>
<feature type="site" description="Glutamine finger" evidence="2">
    <location>
        <position position="572"/>
    </location>
</feature>
<dbReference type="EMBL" id="AL672243">
    <property type="status" value="NOT_ANNOTATED_CDS"/>
    <property type="molecule type" value="Genomic_DNA"/>
</dbReference>
<dbReference type="EMBL" id="AL731648">
    <property type="status" value="NOT_ANNOTATED_CDS"/>
    <property type="molecule type" value="Genomic_DNA"/>
</dbReference>
<dbReference type="EMBL" id="BC147581">
    <property type="protein sequence ID" value="AAI47582.1"/>
    <property type="molecule type" value="mRNA"/>
</dbReference>
<dbReference type="CCDS" id="CCDS41146.1"/>
<dbReference type="RefSeq" id="NP_001074968.1">
    <property type="nucleotide sequence ID" value="NM_001081499.2"/>
</dbReference>
<dbReference type="SMR" id="A3KGB4"/>
<dbReference type="BioGRID" id="232816">
    <property type="interactions" value="6"/>
</dbReference>
<dbReference type="FunCoup" id="A3KGB4">
    <property type="interactions" value="1167"/>
</dbReference>
<dbReference type="STRING" id="10090.ENSMUSP00000094036"/>
<dbReference type="iPTMnet" id="A3KGB4"/>
<dbReference type="PhosphoSitePlus" id="A3KGB4"/>
<dbReference type="SwissPalm" id="A3KGB4"/>
<dbReference type="jPOST" id="A3KGB4"/>
<dbReference type="PaxDb" id="10090-ENSMUSP00000094036"/>
<dbReference type="PeptideAtlas" id="A3KGB4"/>
<dbReference type="ProteomicsDB" id="263075"/>
<dbReference type="Pumba" id="A3KGB4"/>
<dbReference type="Antibodypedia" id="15056">
    <property type="antibodies" value="28 antibodies from 10 providers"/>
</dbReference>
<dbReference type="Ensembl" id="ENSMUST00000096313.4">
    <property type="protein sequence ID" value="ENSMUSP00000094036.4"/>
    <property type="gene ID" value="ENSMUSG00000042473.9"/>
</dbReference>
<dbReference type="GeneID" id="245638"/>
<dbReference type="KEGG" id="mmu:245638"/>
<dbReference type="UCSC" id="uc009ukj.2">
    <property type="organism name" value="mouse"/>
</dbReference>
<dbReference type="AGR" id="MGI:1918101"/>
<dbReference type="CTD" id="54885"/>
<dbReference type="MGI" id="MGI:1918101">
    <property type="gene designation" value="Tbc1d8b"/>
</dbReference>
<dbReference type="VEuPathDB" id="HostDB:ENSMUSG00000042473"/>
<dbReference type="eggNOG" id="KOG4347">
    <property type="taxonomic scope" value="Eukaryota"/>
</dbReference>
<dbReference type="GeneTree" id="ENSGT00940000159451"/>
<dbReference type="HOGENOM" id="CLU_003535_0_2_1"/>
<dbReference type="InParanoid" id="A3KGB4"/>
<dbReference type="OMA" id="GYYTEVV"/>
<dbReference type="OrthoDB" id="17687at2759"/>
<dbReference type="PhylomeDB" id="A3KGB4"/>
<dbReference type="TreeFam" id="TF313145"/>
<dbReference type="Reactome" id="R-MMU-432722">
    <property type="pathway name" value="Golgi Associated Vesicle Biogenesis"/>
</dbReference>
<dbReference type="BioGRID-ORCS" id="245638">
    <property type="hits" value="3 hits in 75 CRISPR screens"/>
</dbReference>
<dbReference type="ChiTaRS" id="Tbc1d8b">
    <property type="organism name" value="mouse"/>
</dbReference>
<dbReference type="PRO" id="PR:A3KGB4"/>
<dbReference type="Proteomes" id="UP000000589">
    <property type="component" value="Chromosome X"/>
</dbReference>
<dbReference type="RNAct" id="A3KGB4">
    <property type="molecule type" value="protein"/>
</dbReference>
<dbReference type="Bgee" id="ENSMUSG00000042473">
    <property type="expression patterns" value="Expressed in vault of skull and 207 other cell types or tissues"/>
</dbReference>
<dbReference type="GO" id="GO:0005829">
    <property type="term" value="C:cytosol"/>
    <property type="evidence" value="ECO:0000250"/>
    <property type="project" value="UniProtKB"/>
</dbReference>
<dbReference type="GO" id="GO:0005509">
    <property type="term" value="F:calcium ion binding"/>
    <property type="evidence" value="ECO:0007669"/>
    <property type="project" value="InterPro"/>
</dbReference>
<dbReference type="GO" id="GO:0005096">
    <property type="term" value="F:GTPase activator activity"/>
    <property type="evidence" value="ECO:0007669"/>
    <property type="project" value="UniProtKB-KW"/>
</dbReference>
<dbReference type="GO" id="GO:0003094">
    <property type="term" value="P:glomerular filtration"/>
    <property type="evidence" value="ECO:0000250"/>
    <property type="project" value="UniProtKB"/>
</dbReference>
<dbReference type="GO" id="GO:0016192">
    <property type="term" value="P:vesicle-mediated transport"/>
    <property type="evidence" value="ECO:0000250"/>
    <property type="project" value="UniProtKB"/>
</dbReference>
<dbReference type="CDD" id="cd13350">
    <property type="entry name" value="PH-GRAM1_TBC1D8B"/>
    <property type="match status" value="1"/>
</dbReference>
<dbReference type="CDD" id="cd13352">
    <property type="entry name" value="PH-GRAM2_TBC1D8B"/>
    <property type="match status" value="1"/>
</dbReference>
<dbReference type="FunFam" id="2.30.29.30:FF:000013">
    <property type="entry name" value="Putative TBC1 domain family member 8B"/>
    <property type="match status" value="1"/>
</dbReference>
<dbReference type="FunFam" id="1.10.238.10:FF:000183">
    <property type="entry name" value="TBC1 domain family member 8B"/>
    <property type="match status" value="1"/>
</dbReference>
<dbReference type="FunFam" id="1.10.472.80:FF:000023">
    <property type="entry name" value="TBC1 domain family member 8B"/>
    <property type="match status" value="1"/>
</dbReference>
<dbReference type="FunFam" id="2.30.29.30:FF:000185">
    <property type="entry name" value="TBC1 domain family member 8B"/>
    <property type="match status" value="1"/>
</dbReference>
<dbReference type="FunFam" id="1.10.8.270:FF:000002">
    <property type="entry name" value="TBC1 domain family member 9B"/>
    <property type="match status" value="1"/>
</dbReference>
<dbReference type="Gene3D" id="1.10.238.10">
    <property type="entry name" value="EF-hand"/>
    <property type="match status" value="1"/>
</dbReference>
<dbReference type="Gene3D" id="2.30.29.30">
    <property type="entry name" value="Pleckstrin-homology domain (PH domain)/Phosphotyrosine-binding domain (PTB)"/>
    <property type="match status" value="2"/>
</dbReference>
<dbReference type="Gene3D" id="1.10.8.270">
    <property type="entry name" value="putative rabgap domain of human tbc1 domain family member 14 like domains"/>
    <property type="match status" value="1"/>
</dbReference>
<dbReference type="Gene3D" id="1.10.10.750">
    <property type="entry name" value="Ypt/Rab-GAP domain of gyp1p, domain 1"/>
    <property type="match status" value="1"/>
</dbReference>
<dbReference type="Gene3D" id="1.10.472.80">
    <property type="entry name" value="Ypt/Rab-GAP domain of gyp1p, domain 3"/>
    <property type="match status" value="1"/>
</dbReference>
<dbReference type="InterPro" id="IPR011992">
    <property type="entry name" value="EF-hand-dom_pair"/>
</dbReference>
<dbReference type="InterPro" id="IPR002048">
    <property type="entry name" value="EF_hand_dom"/>
</dbReference>
<dbReference type="InterPro" id="IPR004182">
    <property type="entry name" value="GRAM"/>
</dbReference>
<dbReference type="InterPro" id="IPR011993">
    <property type="entry name" value="PH-like_dom_sf"/>
</dbReference>
<dbReference type="InterPro" id="IPR000195">
    <property type="entry name" value="Rab-GAP-TBC_dom"/>
</dbReference>
<dbReference type="InterPro" id="IPR035969">
    <property type="entry name" value="Rab-GAP_TBC_sf"/>
</dbReference>
<dbReference type="InterPro" id="IPR036012">
    <property type="entry name" value="TBC1D8B_PH-GRAM1"/>
</dbReference>
<dbReference type="InterPro" id="IPR036015">
    <property type="entry name" value="TBC1D8B_PH-GRAM2"/>
</dbReference>
<dbReference type="PANTHER" id="PTHR47666">
    <property type="entry name" value="PROTEIN VASCULAR ASSOCIATED DEATH 1, CHLOROPLASTIC"/>
    <property type="match status" value="1"/>
</dbReference>
<dbReference type="PANTHER" id="PTHR47666:SF4">
    <property type="entry name" value="TBC1 DOMAIN FAMILY MEMBER 8B"/>
    <property type="match status" value="1"/>
</dbReference>
<dbReference type="Pfam" id="PF02893">
    <property type="entry name" value="GRAM"/>
    <property type="match status" value="2"/>
</dbReference>
<dbReference type="Pfam" id="PF00566">
    <property type="entry name" value="RabGAP-TBC"/>
    <property type="match status" value="1"/>
</dbReference>
<dbReference type="SMART" id="SM00568">
    <property type="entry name" value="GRAM"/>
    <property type="match status" value="2"/>
</dbReference>
<dbReference type="SMART" id="SM00164">
    <property type="entry name" value="TBC"/>
    <property type="match status" value="1"/>
</dbReference>
<dbReference type="SUPFAM" id="SSF47473">
    <property type="entry name" value="EF-hand"/>
    <property type="match status" value="1"/>
</dbReference>
<dbReference type="SUPFAM" id="SSF47923">
    <property type="entry name" value="Ypt/Rab-GAP domain of gyp1p"/>
    <property type="match status" value="2"/>
</dbReference>
<dbReference type="PROSITE" id="PS50222">
    <property type="entry name" value="EF_HAND_2"/>
    <property type="match status" value="1"/>
</dbReference>
<dbReference type="PROSITE" id="PS50086">
    <property type="entry name" value="TBC_RABGAP"/>
    <property type="match status" value="1"/>
</dbReference>
<sequence length="1114" mass="127893">MWLKPEEVLLKNALKLWLMERSNEYFVLQRRRGYGEEGGGGLTGLLVGTLDSVLDSTAKVAPFRILHQTPDSQVYLSIACGANREEITKHWDWLEQNIMKTLSVFDSNEDITNFVQGKIRGLIAEEGKQSFAKEDDPEKFREALLKFEKSFGLPEQEKLVTYYSCSYWRGRVPCQGWLYLSTNFLSFYSFLLGSEIKLIISWDAISKLEKTSTVILTESIHVCSQGENHYFSMFLHINETYLLMEQLANYAIKRLFDKETFDNDPVLDDPLQITKRGLEYRAHSEQFKAFFRLPKEETLKEVHECFLWVPFSHFSSHGKMCISENYICFASQDGNLCSVIIPLREVLAIDKTDDSNRSVIISIKGKTAFRFSELKDFEQLVAKLRLKCRAASTQDDVSTEVAVSSDSTGPSENFEEQPLTCPKECSKTVNTEALMTVFHPQNLENLDSKMLKEKMKEQSWNILFSECGRGVSMFRTKKTRDLVVRGIPETLRGELWMLFSGAVNDMATNPGYYAEVVEQSLGTSNLATEEIERDLRRSLPEHPAFQSDTGISALRRVLTAYAYRNPKIGYCQAMNILTSVLLLYAKEEEAFWLLVAVCERMLPDYFNRRIIGALVDQAVFEELIRDHLPQLTDHMTDMTFFSSVSLSWFLTLFISVLPIESAVNVVDCFFYDGIKAILQLGLAILDYNLDKLLTCKDDAEAVTALNRFFDNVINKDSPLPSNVQQGSNISNEKSDHTKVDITDLIKESNEKYGSIRYEDIHSMRCRNRLYVIQTLEETTKQNVLRVVSQDVKMSLQELDELYVIFKKELFISCYWYLSCPGLKHHDPSLPYLEQYQIDCQQFRVLYHLLSPWAHSANRDSLALWTFRLLDENSDCLINFKEFSSAIDIMYNGSFTDKLKLLFKLHIPPAYTEVMSKTSSKGDELSTEELLYFSQLQVSKPADEKETESGRNSPEKGKGKIDIQAYLSQWQDELLKKEETIKDLPRMNQSQFIQFSKTLYNLFHEDPEEESLYQAIAIVTNLLLRMEEVGRKLHSPASSASTARDSGPSEGNAESSVKKDLPSPREEHQWSFAFEQILASLLNEPALVRFFERPLDLKAKLENAKSSQLRSRTKM</sequence>
<evidence type="ECO:0000250" key="1">
    <source>
        <dbReference type="UniProtKB" id="Q0IIM8"/>
    </source>
</evidence>
<evidence type="ECO:0000250" key="2">
    <source>
        <dbReference type="UniProtKB" id="Q96BZ9"/>
    </source>
</evidence>
<evidence type="ECO:0000255" key="3"/>
<evidence type="ECO:0000255" key="4">
    <source>
        <dbReference type="PROSITE-ProRule" id="PRU00163"/>
    </source>
</evidence>
<evidence type="ECO:0000255" key="5">
    <source>
        <dbReference type="PROSITE-ProRule" id="PRU00448"/>
    </source>
</evidence>
<evidence type="ECO:0000256" key="6">
    <source>
        <dbReference type="SAM" id="MobiDB-lite"/>
    </source>
</evidence>